<comment type="function">
    <text evidence="4">Auxin response factors (ARFs) are transcriptional factors that bind specifically to the DNA sequence 5'-TGTCTC-3' found in the auxin-responsive promoter elements (AuxREs). Could act as transcriptional activator or repressor. Formation of heterodimers with Aux/IAA proteins may alter their ability to modulate early auxin response genes expression.</text>
</comment>
<comment type="subunit">
    <text evidence="1">Homodimers and heterodimers.</text>
</comment>
<comment type="subcellular location">
    <subcellularLocation>
        <location>Nucleus</location>
    </subcellularLocation>
</comment>
<comment type="domain">
    <text>Interactions between auxin response factors (ARFs) and Aux/IAA proteins occur through their C-terminal dimerization domains III and IV.</text>
</comment>
<comment type="similarity">
    <text evidence="5">Belongs to the ARF family.</text>
</comment>
<comment type="sequence caution" evidence="5">
    <conflict type="erroneous gene model prediction">
        <sequence resource="EMBL-CDS" id="AAF79360"/>
    </conflict>
</comment>
<gene>
    <name type="primary">ARF15</name>
    <name type="ordered locus">At1g35520</name>
    <name type="ORF">F15O4.42</name>
</gene>
<feature type="chain" id="PRO_0000111519" description="Putative auxin response factor 15">
    <location>
        <begin position="1"/>
        <end position="593"/>
    </location>
</feature>
<feature type="domain" description="PB1" evidence="3">
    <location>
        <begin position="511"/>
        <end position="592"/>
    </location>
</feature>
<feature type="DNA-binding region" description="TF-B3" evidence="2">
    <location>
        <begin position="126"/>
        <end position="228"/>
    </location>
</feature>
<organism>
    <name type="scientific">Arabidopsis thaliana</name>
    <name type="common">Mouse-ear cress</name>
    <dbReference type="NCBI Taxonomy" id="3702"/>
    <lineage>
        <taxon>Eukaryota</taxon>
        <taxon>Viridiplantae</taxon>
        <taxon>Streptophyta</taxon>
        <taxon>Embryophyta</taxon>
        <taxon>Tracheophyta</taxon>
        <taxon>Spermatophyta</taxon>
        <taxon>Magnoliopsida</taxon>
        <taxon>eudicotyledons</taxon>
        <taxon>Gunneridae</taxon>
        <taxon>Pentapetalae</taxon>
        <taxon>rosids</taxon>
        <taxon>malvids</taxon>
        <taxon>Brassicales</taxon>
        <taxon>Brassicaceae</taxon>
        <taxon>Camelineae</taxon>
        <taxon>Arabidopsis</taxon>
    </lineage>
</organism>
<name>ARFO_ARATH</name>
<dbReference type="EMBL" id="AC007887">
    <property type="protein sequence ID" value="AAF79360.1"/>
    <property type="status" value="ALT_SEQ"/>
    <property type="molecule type" value="Genomic_DNA"/>
</dbReference>
<dbReference type="EMBL" id="CP002684">
    <property type="protein sequence ID" value="AEE31805.2"/>
    <property type="molecule type" value="Genomic_DNA"/>
</dbReference>
<dbReference type="RefSeq" id="NP_001319151.1">
    <property type="nucleotide sequence ID" value="NM_001333160.1"/>
</dbReference>
<dbReference type="SMR" id="Q9LQE3"/>
<dbReference type="BioGRID" id="25679">
    <property type="interactions" value="2"/>
</dbReference>
<dbReference type="FunCoup" id="Q9LQE3">
    <property type="interactions" value="289"/>
</dbReference>
<dbReference type="STRING" id="3702.Q9LQE3"/>
<dbReference type="iPTMnet" id="Q9LQE3"/>
<dbReference type="PaxDb" id="3702-AT1G35520.1"/>
<dbReference type="EnsemblPlants" id="AT1G35520.1">
    <property type="protein sequence ID" value="AT1G35520.1"/>
    <property type="gene ID" value="AT1G35520"/>
</dbReference>
<dbReference type="GeneID" id="840447"/>
<dbReference type="Gramene" id="AT1G35520.1">
    <property type="protein sequence ID" value="AT1G35520.1"/>
    <property type="gene ID" value="AT1G35520"/>
</dbReference>
<dbReference type="KEGG" id="ath:AT1G35520"/>
<dbReference type="Araport" id="AT1G35520"/>
<dbReference type="TAIR" id="AT1G35520">
    <property type="gene designation" value="ARF15"/>
</dbReference>
<dbReference type="eggNOG" id="ENOG502QTME">
    <property type="taxonomic scope" value="Eukaryota"/>
</dbReference>
<dbReference type="HOGENOM" id="CLU_002626_4_4_1"/>
<dbReference type="InParanoid" id="Q9LQE3"/>
<dbReference type="OMA" id="VNADNKF"/>
<dbReference type="PhylomeDB" id="Q9LQE3"/>
<dbReference type="PRO" id="PR:Q9LQE3"/>
<dbReference type="Proteomes" id="UP000006548">
    <property type="component" value="Chromosome 1"/>
</dbReference>
<dbReference type="ExpressionAtlas" id="Q9LQE3">
    <property type="expression patterns" value="differential"/>
</dbReference>
<dbReference type="GO" id="GO:0005634">
    <property type="term" value="C:nucleus"/>
    <property type="evidence" value="ECO:0007669"/>
    <property type="project" value="UniProtKB-SubCell"/>
</dbReference>
<dbReference type="GO" id="GO:0003677">
    <property type="term" value="F:DNA binding"/>
    <property type="evidence" value="ECO:0007669"/>
    <property type="project" value="UniProtKB-KW"/>
</dbReference>
<dbReference type="GO" id="GO:0009734">
    <property type="term" value="P:auxin-activated signaling pathway"/>
    <property type="evidence" value="ECO:0007669"/>
    <property type="project" value="UniProtKB-KW"/>
</dbReference>
<dbReference type="GO" id="GO:0006355">
    <property type="term" value="P:regulation of DNA-templated transcription"/>
    <property type="evidence" value="ECO:0007669"/>
    <property type="project" value="InterPro"/>
</dbReference>
<dbReference type="CDD" id="cd10017">
    <property type="entry name" value="B3_DNA"/>
    <property type="match status" value="1"/>
</dbReference>
<dbReference type="FunFam" id="2.30.30.1040:FF:000001">
    <property type="entry name" value="Auxin response factor"/>
    <property type="match status" value="1"/>
</dbReference>
<dbReference type="FunFam" id="2.40.330.10:FF:000001">
    <property type="entry name" value="Auxin response factor"/>
    <property type="match status" value="1"/>
</dbReference>
<dbReference type="Gene3D" id="2.30.30.1040">
    <property type="match status" value="1"/>
</dbReference>
<dbReference type="Gene3D" id="2.40.330.10">
    <property type="entry name" value="DNA-binding pseudobarrel domain"/>
    <property type="match status" value="1"/>
</dbReference>
<dbReference type="Gene3D" id="3.10.20.90">
    <property type="entry name" value="Phosphatidylinositol 3-kinase Catalytic Subunit, Chain A, domain 1"/>
    <property type="match status" value="1"/>
</dbReference>
<dbReference type="InterPro" id="IPR010525">
    <property type="entry name" value="ARF_dom"/>
</dbReference>
<dbReference type="InterPro" id="IPR044835">
    <property type="entry name" value="ARF_plant"/>
</dbReference>
<dbReference type="InterPro" id="IPR033389">
    <property type="entry name" value="AUX/IAA_dom"/>
</dbReference>
<dbReference type="InterPro" id="IPR003340">
    <property type="entry name" value="B3_DNA-bd"/>
</dbReference>
<dbReference type="InterPro" id="IPR015300">
    <property type="entry name" value="DNA-bd_pseudobarrel_sf"/>
</dbReference>
<dbReference type="InterPro" id="IPR053793">
    <property type="entry name" value="PB1-like"/>
</dbReference>
<dbReference type="PANTHER" id="PTHR31384:SF164">
    <property type="entry name" value="AUXIN RESPONSE FACTOR 12-RELATED"/>
    <property type="match status" value="1"/>
</dbReference>
<dbReference type="PANTHER" id="PTHR31384">
    <property type="entry name" value="AUXIN RESPONSE FACTOR 4-RELATED"/>
    <property type="match status" value="1"/>
</dbReference>
<dbReference type="Pfam" id="PF06507">
    <property type="entry name" value="ARF_AD"/>
    <property type="match status" value="1"/>
</dbReference>
<dbReference type="Pfam" id="PF02309">
    <property type="entry name" value="AUX_IAA"/>
    <property type="match status" value="1"/>
</dbReference>
<dbReference type="Pfam" id="PF02362">
    <property type="entry name" value="B3"/>
    <property type="match status" value="1"/>
</dbReference>
<dbReference type="SMART" id="SM01019">
    <property type="entry name" value="B3"/>
    <property type="match status" value="1"/>
</dbReference>
<dbReference type="SUPFAM" id="SSF54277">
    <property type="entry name" value="CAD &amp; PB1 domains"/>
    <property type="match status" value="1"/>
</dbReference>
<dbReference type="SUPFAM" id="SSF101936">
    <property type="entry name" value="DNA-binding pseudobarrel domain"/>
    <property type="match status" value="1"/>
</dbReference>
<dbReference type="PROSITE" id="PS50863">
    <property type="entry name" value="B3"/>
    <property type="match status" value="1"/>
</dbReference>
<dbReference type="PROSITE" id="PS51745">
    <property type="entry name" value="PB1"/>
    <property type="match status" value="1"/>
</dbReference>
<protein>
    <recommendedName>
        <fullName>Putative auxin response factor 15</fullName>
    </recommendedName>
</protein>
<sequence>METGNVVNAQPELSGIIDRSKSYMYEQLWKLCAGPLCDIPKLGEKVYYFPQGNIELVEASTREELNELQPICDLPSKLQCRVIAIHLKVENNSDETYAKITLMPDTTQVVIPTQNENQFRPLVNSFTKVLTASDISANGVFSVPKKHAIECLPPLDMSQPLPAQELLAIDLHGNQWSFRHSYRGTPQRHLLTTGWNEFTTSKKLVKGDVIVFVRGETGELRVGIRRARHQQGNIPSSIVSIDCMRHGVIASAKHAFDNQCMFIVVYKPRSSQFIVSYDKFLDAVNNKFNVGSRFTMRFEGDDLSERRYFGTIIGVSNFSPHWKCSDWRSLEVQWDEFASFLRPNKVSPWEIEHLMPALNVPRSSFLKNKRLREVNEFGSSSSHLLPPILTQGQEIGQLSVASPMNISLLYRETTEDAMNPSRLLMSYPVQPMPKRNYNNQMVTQIEENITTKAGTNFRLFGVSLATPPVIKDPIEQIGSDISKLTEGKKFGQSQTLRSPTKIQSKQFSSTRTCTKVQMQGVTIGRAVDLSVLNGYDQLILELEKLFDLKGQLQTRNQWKIIFTGSDEDEMLVGDDPWPEFCNMVKRIYIQKRR</sequence>
<accession>Q9LQE3</accession>
<accession>F4HYE3</accession>
<reference key="1">
    <citation type="journal article" date="2000" name="Nature">
        <title>Sequence and analysis of chromosome 1 of the plant Arabidopsis thaliana.</title>
        <authorList>
            <person name="Theologis A."/>
            <person name="Ecker J.R."/>
            <person name="Palm C.J."/>
            <person name="Federspiel N.A."/>
            <person name="Kaul S."/>
            <person name="White O."/>
            <person name="Alonso J."/>
            <person name="Altafi H."/>
            <person name="Araujo R."/>
            <person name="Bowman C.L."/>
            <person name="Brooks S.Y."/>
            <person name="Buehler E."/>
            <person name="Chan A."/>
            <person name="Chao Q."/>
            <person name="Chen H."/>
            <person name="Cheuk R.F."/>
            <person name="Chin C.W."/>
            <person name="Chung M.K."/>
            <person name="Conn L."/>
            <person name="Conway A.B."/>
            <person name="Conway A.R."/>
            <person name="Creasy T.H."/>
            <person name="Dewar K."/>
            <person name="Dunn P."/>
            <person name="Etgu P."/>
            <person name="Feldblyum T.V."/>
            <person name="Feng J.-D."/>
            <person name="Fong B."/>
            <person name="Fujii C.Y."/>
            <person name="Gill J.E."/>
            <person name="Goldsmith A.D."/>
            <person name="Haas B."/>
            <person name="Hansen N.F."/>
            <person name="Hughes B."/>
            <person name="Huizar L."/>
            <person name="Hunter J.L."/>
            <person name="Jenkins J."/>
            <person name="Johnson-Hopson C."/>
            <person name="Khan S."/>
            <person name="Khaykin E."/>
            <person name="Kim C.J."/>
            <person name="Koo H.L."/>
            <person name="Kremenetskaia I."/>
            <person name="Kurtz D.B."/>
            <person name="Kwan A."/>
            <person name="Lam B."/>
            <person name="Langin-Hooper S."/>
            <person name="Lee A."/>
            <person name="Lee J.M."/>
            <person name="Lenz C.A."/>
            <person name="Li J.H."/>
            <person name="Li Y.-P."/>
            <person name="Lin X."/>
            <person name="Liu S.X."/>
            <person name="Liu Z.A."/>
            <person name="Luros J.S."/>
            <person name="Maiti R."/>
            <person name="Marziali A."/>
            <person name="Militscher J."/>
            <person name="Miranda M."/>
            <person name="Nguyen M."/>
            <person name="Nierman W.C."/>
            <person name="Osborne B.I."/>
            <person name="Pai G."/>
            <person name="Peterson J."/>
            <person name="Pham P.K."/>
            <person name="Rizzo M."/>
            <person name="Rooney T."/>
            <person name="Rowley D."/>
            <person name="Sakano H."/>
            <person name="Salzberg S.L."/>
            <person name="Schwartz J.R."/>
            <person name="Shinn P."/>
            <person name="Southwick A.M."/>
            <person name="Sun H."/>
            <person name="Tallon L.J."/>
            <person name="Tambunga G."/>
            <person name="Toriumi M.J."/>
            <person name="Town C.D."/>
            <person name="Utterback T."/>
            <person name="Van Aken S."/>
            <person name="Vaysberg M."/>
            <person name="Vysotskaia V.S."/>
            <person name="Walker M."/>
            <person name="Wu D."/>
            <person name="Yu G."/>
            <person name="Fraser C.M."/>
            <person name="Venter J.C."/>
            <person name="Davis R.W."/>
        </authorList>
    </citation>
    <scope>NUCLEOTIDE SEQUENCE [LARGE SCALE GENOMIC DNA]</scope>
    <source>
        <strain>cv. Columbia</strain>
    </source>
</reference>
<reference key="2">
    <citation type="journal article" date="2017" name="Plant J.">
        <title>Araport11: a complete reannotation of the Arabidopsis thaliana reference genome.</title>
        <authorList>
            <person name="Cheng C.Y."/>
            <person name="Krishnakumar V."/>
            <person name="Chan A.P."/>
            <person name="Thibaud-Nissen F."/>
            <person name="Schobel S."/>
            <person name="Town C.D."/>
        </authorList>
    </citation>
    <scope>GENOME REANNOTATION</scope>
    <source>
        <strain>cv. Columbia</strain>
    </source>
</reference>
<reference key="3">
    <citation type="journal article" date="2002" name="Plant Mol. Biol.">
        <title>Auxin-responsive gene expression: genes, promoters and regulatory factors.</title>
        <authorList>
            <person name="Hagen G."/>
            <person name="Guilfoyle T.J."/>
        </authorList>
    </citation>
    <scope>GENE FAMILY</scope>
    <scope>NOMENCLATURE</scope>
    <scope>FUNCTION</scope>
</reference>
<reference key="4">
    <citation type="journal article" date="2008" name="Trends Plant Sci.">
        <title>The plant B3 superfamily.</title>
        <authorList>
            <person name="Swaminathan K."/>
            <person name="Peterson K."/>
            <person name="Jack T."/>
        </authorList>
    </citation>
    <scope>GENE FAMILY</scope>
</reference>
<proteinExistence type="inferred from homology"/>
<evidence type="ECO:0000250" key="1"/>
<evidence type="ECO:0000255" key="2">
    <source>
        <dbReference type="PROSITE-ProRule" id="PRU00326"/>
    </source>
</evidence>
<evidence type="ECO:0000255" key="3">
    <source>
        <dbReference type="PROSITE-ProRule" id="PRU01081"/>
    </source>
</evidence>
<evidence type="ECO:0000269" key="4">
    <source>
    </source>
</evidence>
<evidence type="ECO:0000305" key="5"/>
<keyword id="KW-0927">Auxin signaling pathway</keyword>
<keyword id="KW-0238">DNA-binding</keyword>
<keyword id="KW-0539">Nucleus</keyword>
<keyword id="KW-1185">Reference proteome</keyword>
<keyword id="KW-0804">Transcription</keyword>
<keyword id="KW-0805">Transcription regulation</keyword>